<dbReference type="EC" id="1.2.1.72" evidence="1"/>
<dbReference type="EMBL" id="AE017340">
    <property type="protein sequence ID" value="AAV83045.1"/>
    <property type="molecule type" value="Genomic_DNA"/>
</dbReference>
<dbReference type="RefSeq" id="WP_011235440.1">
    <property type="nucleotide sequence ID" value="NC_006512.1"/>
</dbReference>
<dbReference type="SMR" id="Q5QVL6"/>
<dbReference type="STRING" id="283942.IL2213"/>
<dbReference type="GeneID" id="41337402"/>
<dbReference type="KEGG" id="ilo:IL2213"/>
<dbReference type="eggNOG" id="COG0057">
    <property type="taxonomic scope" value="Bacteria"/>
</dbReference>
<dbReference type="HOGENOM" id="CLU_030140_0_0_6"/>
<dbReference type="OrthoDB" id="9803304at2"/>
<dbReference type="UniPathway" id="UPA00244">
    <property type="reaction ID" value="UER00309"/>
</dbReference>
<dbReference type="Proteomes" id="UP000001171">
    <property type="component" value="Chromosome"/>
</dbReference>
<dbReference type="GO" id="GO:0005737">
    <property type="term" value="C:cytoplasm"/>
    <property type="evidence" value="ECO:0007669"/>
    <property type="project" value="UniProtKB-SubCell"/>
</dbReference>
<dbReference type="GO" id="GO:0048001">
    <property type="term" value="F:erythrose-4-phosphate dehydrogenase activity"/>
    <property type="evidence" value="ECO:0007669"/>
    <property type="project" value="UniProtKB-UniRule"/>
</dbReference>
<dbReference type="GO" id="GO:0051287">
    <property type="term" value="F:NAD binding"/>
    <property type="evidence" value="ECO:0007669"/>
    <property type="project" value="InterPro"/>
</dbReference>
<dbReference type="GO" id="GO:0042823">
    <property type="term" value="P:pyridoxal phosphate biosynthetic process"/>
    <property type="evidence" value="ECO:0007669"/>
    <property type="project" value="UniProtKB-UniRule"/>
</dbReference>
<dbReference type="GO" id="GO:0008615">
    <property type="term" value="P:pyridoxine biosynthetic process"/>
    <property type="evidence" value="ECO:0007669"/>
    <property type="project" value="UniProtKB-UniRule"/>
</dbReference>
<dbReference type="CDD" id="cd23937">
    <property type="entry name" value="GAPDH_C_E4PDH"/>
    <property type="match status" value="1"/>
</dbReference>
<dbReference type="CDD" id="cd17892">
    <property type="entry name" value="GAPDH_N_E4PDH"/>
    <property type="match status" value="1"/>
</dbReference>
<dbReference type="FunFam" id="3.30.360.10:FF:000007">
    <property type="entry name" value="D-erythrose-4-phosphate dehydrogenase"/>
    <property type="match status" value="1"/>
</dbReference>
<dbReference type="FunFam" id="3.40.50.720:FF:000001">
    <property type="entry name" value="Glyceraldehyde-3-phosphate dehydrogenase"/>
    <property type="match status" value="1"/>
</dbReference>
<dbReference type="Gene3D" id="3.30.360.10">
    <property type="entry name" value="Dihydrodipicolinate Reductase, domain 2"/>
    <property type="match status" value="1"/>
</dbReference>
<dbReference type="Gene3D" id="3.40.50.720">
    <property type="entry name" value="NAD(P)-binding Rossmann-like Domain"/>
    <property type="match status" value="1"/>
</dbReference>
<dbReference type="HAMAP" id="MF_01640">
    <property type="entry name" value="E4P_dehydrog"/>
    <property type="match status" value="1"/>
</dbReference>
<dbReference type="InterPro" id="IPR006422">
    <property type="entry name" value="E4P_DH_bac"/>
</dbReference>
<dbReference type="InterPro" id="IPR020831">
    <property type="entry name" value="GlycerAld/Erythrose_P_DH"/>
</dbReference>
<dbReference type="InterPro" id="IPR020829">
    <property type="entry name" value="GlycerAld_3-P_DH_cat"/>
</dbReference>
<dbReference type="InterPro" id="IPR020828">
    <property type="entry name" value="GlycerAld_3-P_DH_NAD(P)-bd"/>
</dbReference>
<dbReference type="InterPro" id="IPR036291">
    <property type="entry name" value="NAD(P)-bd_dom_sf"/>
</dbReference>
<dbReference type="NCBIfam" id="TIGR01532">
    <property type="entry name" value="E4PD_g-proteo"/>
    <property type="match status" value="1"/>
</dbReference>
<dbReference type="NCBIfam" id="NF010058">
    <property type="entry name" value="PRK13535.1"/>
    <property type="match status" value="1"/>
</dbReference>
<dbReference type="PANTHER" id="PTHR43148">
    <property type="entry name" value="GLYCERALDEHYDE-3-PHOSPHATE DEHYDROGENASE 2"/>
    <property type="match status" value="1"/>
</dbReference>
<dbReference type="Pfam" id="PF02800">
    <property type="entry name" value="Gp_dh_C"/>
    <property type="match status" value="1"/>
</dbReference>
<dbReference type="Pfam" id="PF00044">
    <property type="entry name" value="Gp_dh_N"/>
    <property type="match status" value="1"/>
</dbReference>
<dbReference type="PIRSF" id="PIRSF000149">
    <property type="entry name" value="GAP_DH"/>
    <property type="match status" value="1"/>
</dbReference>
<dbReference type="PRINTS" id="PR00078">
    <property type="entry name" value="G3PDHDRGNASE"/>
</dbReference>
<dbReference type="SMART" id="SM00846">
    <property type="entry name" value="Gp_dh_N"/>
    <property type="match status" value="1"/>
</dbReference>
<dbReference type="SUPFAM" id="SSF55347">
    <property type="entry name" value="Glyceraldehyde-3-phosphate dehydrogenase-like, C-terminal domain"/>
    <property type="match status" value="1"/>
</dbReference>
<dbReference type="SUPFAM" id="SSF51735">
    <property type="entry name" value="NAD(P)-binding Rossmann-fold domains"/>
    <property type="match status" value="1"/>
</dbReference>
<reference key="1">
    <citation type="journal article" date="2004" name="Proc. Natl. Acad. Sci. U.S.A.">
        <title>Genome sequence of the deep-sea gamma-proteobacterium Idiomarina loihiensis reveals amino acid fermentation as a source of carbon and energy.</title>
        <authorList>
            <person name="Hou S."/>
            <person name="Saw J.H."/>
            <person name="Lee K.S."/>
            <person name="Freitas T.A."/>
            <person name="Belisle C."/>
            <person name="Kawarabayasi Y."/>
            <person name="Donachie S.P."/>
            <person name="Pikina A."/>
            <person name="Galperin M.Y."/>
            <person name="Koonin E.V."/>
            <person name="Makarova K.S."/>
            <person name="Omelchenko M.V."/>
            <person name="Sorokin A."/>
            <person name="Wolf Y.I."/>
            <person name="Li Q.X."/>
            <person name="Keum Y.S."/>
            <person name="Campbell S."/>
            <person name="Denery J."/>
            <person name="Aizawa S."/>
            <person name="Shibata S."/>
            <person name="Malahoff A."/>
            <person name="Alam M."/>
        </authorList>
    </citation>
    <scope>NUCLEOTIDE SEQUENCE [LARGE SCALE GENOMIC DNA]</scope>
    <source>
        <strain>ATCC BAA-735 / DSM 15497 / L2-TR</strain>
    </source>
</reference>
<keyword id="KW-0963">Cytoplasm</keyword>
<keyword id="KW-0520">NAD</keyword>
<keyword id="KW-0560">Oxidoreductase</keyword>
<keyword id="KW-0664">Pyridoxine biosynthesis</keyword>
<keyword id="KW-1185">Reference proteome</keyword>
<name>E4PD_IDILO</name>
<comment type="function">
    <text evidence="1">Catalyzes the NAD-dependent conversion of D-erythrose 4-phosphate to 4-phosphoerythronate.</text>
</comment>
<comment type="catalytic activity">
    <reaction evidence="1">
        <text>D-erythrose 4-phosphate + NAD(+) + H2O = 4-phospho-D-erythronate + NADH + 2 H(+)</text>
        <dbReference type="Rhea" id="RHEA:12056"/>
        <dbReference type="ChEBI" id="CHEBI:15377"/>
        <dbReference type="ChEBI" id="CHEBI:15378"/>
        <dbReference type="ChEBI" id="CHEBI:16897"/>
        <dbReference type="ChEBI" id="CHEBI:57540"/>
        <dbReference type="ChEBI" id="CHEBI:57945"/>
        <dbReference type="ChEBI" id="CHEBI:58766"/>
        <dbReference type="EC" id="1.2.1.72"/>
    </reaction>
</comment>
<comment type="pathway">
    <text evidence="1">Cofactor biosynthesis; pyridoxine 5'-phosphate biosynthesis; pyridoxine 5'-phosphate from D-erythrose 4-phosphate: step 1/5.</text>
</comment>
<comment type="subunit">
    <text evidence="1">Homotetramer.</text>
</comment>
<comment type="subcellular location">
    <subcellularLocation>
        <location evidence="1">Cytoplasm</location>
    </subcellularLocation>
</comment>
<comment type="similarity">
    <text evidence="1">Belongs to the glyceraldehyde-3-phosphate dehydrogenase family. Epd subfamily.</text>
</comment>
<accession>Q5QVL6</accession>
<sequence>MSEPARIAINGFGRIGRSFLRALYENGYRDSVQVVLINEPAASEAIAHLLKYDSSHGRFGEKVTQSGDALTVAGDNIALTHQTEIEAIDWRAHEVDFVVDCTGVFGSQADGQLYLQQGVKRVLFSHPGKPDVDFTAIYGVNEKELTVDHKVVSNGSCTTNCIVPVIKVLDDAFGIDSGAITTIHSAMHDQQVIDAYHPDLRRTRAAGRSIIPVDTRLARGIERILPHLEGRFEAIAVRVPTTNVTAMDLSVTLNSDATIEQINQVLREQSERQLAGILDYTEEPLVSIDFNHDPHSSIVDGTQTRVSHKRLVKLLCWCDNEWGFANRLLDTAKTMAEQTEH</sequence>
<protein>
    <recommendedName>
        <fullName evidence="1">D-erythrose-4-phosphate dehydrogenase</fullName>
        <shortName evidence="1">E4PDH</shortName>
        <ecNumber evidence="1">1.2.1.72</ecNumber>
    </recommendedName>
</protein>
<feature type="chain" id="PRO_0000293150" description="D-erythrose-4-phosphate dehydrogenase">
    <location>
        <begin position="1"/>
        <end position="341"/>
    </location>
</feature>
<feature type="active site" description="Nucleophile" evidence="1">
    <location>
        <position position="157"/>
    </location>
</feature>
<feature type="binding site" evidence="1">
    <location>
        <begin position="14"/>
        <end position="15"/>
    </location>
    <ligand>
        <name>NAD(+)</name>
        <dbReference type="ChEBI" id="CHEBI:57540"/>
    </ligand>
</feature>
<feature type="binding site" evidence="1">
    <location>
        <begin position="156"/>
        <end position="158"/>
    </location>
    <ligand>
        <name>substrate</name>
    </ligand>
</feature>
<feature type="binding site" evidence="1">
    <location>
        <position position="202"/>
    </location>
    <ligand>
        <name>substrate</name>
    </ligand>
</feature>
<feature type="binding site" evidence="1">
    <location>
        <begin position="215"/>
        <end position="216"/>
    </location>
    <ligand>
        <name>substrate</name>
    </ligand>
</feature>
<feature type="binding site" evidence="1">
    <location>
        <position position="238"/>
    </location>
    <ligand>
        <name>substrate</name>
    </ligand>
</feature>
<feature type="binding site" evidence="1">
    <location>
        <position position="320"/>
    </location>
    <ligand>
        <name>NAD(+)</name>
        <dbReference type="ChEBI" id="CHEBI:57540"/>
    </ligand>
</feature>
<feature type="site" description="Activates thiol group during catalysis" evidence="1">
    <location>
        <position position="184"/>
    </location>
</feature>
<evidence type="ECO:0000255" key="1">
    <source>
        <dbReference type="HAMAP-Rule" id="MF_01640"/>
    </source>
</evidence>
<organism>
    <name type="scientific">Idiomarina loihiensis (strain ATCC BAA-735 / DSM 15497 / L2-TR)</name>
    <dbReference type="NCBI Taxonomy" id="283942"/>
    <lineage>
        <taxon>Bacteria</taxon>
        <taxon>Pseudomonadati</taxon>
        <taxon>Pseudomonadota</taxon>
        <taxon>Gammaproteobacteria</taxon>
        <taxon>Alteromonadales</taxon>
        <taxon>Idiomarinaceae</taxon>
        <taxon>Idiomarina</taxon>
    </lineage>
</organism>
<proteinExistence type="inferred from homology"/>
<gene>
    <name evidence="1" type="primary">epd</name>
    <name type="ordered locus">IL2213</name>
</gene>